<keyword id="KW-0044">Antibiotic</keyword>
<keyword id="KW-0929">Antimicrobial</keyword>
<keyword id="KW-0903">Direct protein sequencing</keyword>
<keyword id="KW-0964">Secreted</keyword>
<keyword id="KW-0732">Signal</keyword>
<comment type="function">
    <text evidence="2">Has antibacterial activity against the Gram-positive bacterium M.luteus with an IC(90) of 125ug/ml. Has weak antibacterial activity against the Gram-negative bacterium A.hydrophila.</text>
</comment>
<comment type="subcellular location">
    <subcellularLocation>
        <location evidence="2">Secreted</location>
    </subcellularLocation>
</comment>
<comment type="tissue specificity">
    <text evidence="1">Expressed in the ejaculatory ducts of mature males. Not detected in the ejaculatory ducts of immature males. Not detected in hepatopancreas, female reproductive tract, eyes, exoskeleton, subcuticular epithelia, heart, gills, stomach, muscle and hemocytes.</text>
</comment>
<proteinExistence type="evidence at protein level"/>
<sequence>MRSSLLLGLTVVVLLGVIVPPCMAGQALNKLMPKIVSAIIYMVGQPNAGVTFLGHQCLVESTRQPDGFYTAKMSCASWTHDNPIVGEGRSRVELEALKGSITNFVQTASNYKKFTIDEVEDWIASY</sequence>
<protein>
    <recommendedName>
        <fullName evidence="3 5">Scygonadin</fullName>
    </recommendedName>
</protein>
<feature type="signal peptide" evidence="2">
    <location>
        <begin position="1"/>
        <end position="24"/>
    </location>
</feature>
<feature type="chain" id="PRO_5000094859" description="Scygonadin" evidence="2">
    <location>
        <begin position="25"/>
        <end position="126"/>
    </location>
</feature>
<reference evidence="4 5" key="1">
    <citation type="journal article" date="2007" name="Mol. Immunol.">
        <title>A male-specific expression gene, encodes a novel anionic antimicrobial peptide, scygonadin, in Scylla serrata.</title>
        <authorList>
            <person name="Wang K.-J."/>
            <person name="Huang W.-S."/>
            <person name="Yang M."/>
            <person name="Chen H.-Y."/>
            <person name="Bo J."/>
            <person name="Li S.-J."/>
            <person name="Wang G.-Z."/>
        </authorList>
    </citation>
    <scope>NUCLEOTIDE SEQUENCE [GENOMIC DNA / MRNA]</scope>
    <scope>TISSUE SPECIFICITY</scope>
    <source>
        <tissue evidence="5">Seminal plasma</tissue>
    </source>
</reference>
<reference evidence="4" key="2">
    <citation type="journal article" date="2006" name="J. Exp. Mar. Biol. Ecol.">
        <title>Purification and part characterization of a novel antibacterial protein Scygonadin isolated from the seminal plasma of mud crab Scylla serrata (forskaall, 1775).</title>
        <authorList>
            <person name="Huang W.-S."/>
            <person name="Wang K.-J."/>
            <person name="Yang M."/>
            <person name="Cai J.J."/>
            <person name="Li S.-J."/>
            <person name="Wang G.-Z."/>
        </authorList>
    </citation>
    <scope>PROTEIN SEQUENCE OF 25-44</scope>
    <scope>SUBCELLULAR LOCATION</scope>
    <scope>FUNCTION</scope>
    <source>
        <tissue evidence="2">Seminal plasma</tissue>
    </source>
</reference>
<accession>Q5D710</accession>
<dbReference type="EMBL" id="AY864802">
    <property type="protein sequence ID" value="AAW57403.1"/>
    <property type="molecule type" value="mRNA"/>
</dbReference>
<dbReference type="EMBL" id="DQ059303">
    <property type="protein sequence ID" value="AAY98913.1"/>
    <property type="molecule type" value="Genomic_DNA"/>
</dbReference>
<dbReference type="SMR" id="Q5D710"/>
<dbReference type="GO" id="GO:0005576">
    <property type="term" value="C:extracellular region"/>
    <property type="evidence" value="ECO:0000314"/>
    <property type="project" value="UniProtKB"/>
</dbReference>
<dbReference type="GO" id="GO:0050829">
    <property type="term" value="P:defense response to Gram-negative bacterium"/>
    <property type="evidence" value="ECO:0000314"/>
    <property type="project" value="UniProtKB"/>
</dbReference>
<dbReference type="GO" id="GO:0050830">
    <property type="term" value="P:defense response to Gram-positive bacterium"/>
    <property type="evidence" value="ECO:0000314"/>
    <property type="project" value="UniProtKB"/>
</dbReference>
<dbReference type="Gene3D" id="3.30.160.320">
    <property type="match status" value="1"/>
</dbReference>
<dbReference type="InterPro" id="IPR024509">
    <property type="entry name" value="Anti-LPS_factor/Scygonadin"/>
</dbReference>
<dbReference type="InterPro" id="IPR038539">
    <property type="entry name" value="Anti-LPS_factor/Scygonadin_sf"/>
</dbReference>
<dbReference type="Pfam" id="PF11630">
    <property type="entry name" value="Anti-LPS-SCYG"/>
    <property type="match status" value="1"/>
</dbReference>
<name>SCYG_SCYSE</name>
<evidence type="ECO:0000269" key="1">
    <source>
    </source>
</evidence>
<evidence type="ECO:0000269" key="2">
    <source ref="2"/>
</evidence>
<evidence type="ECO:0000303" key="3">
    <source ref="2"/>
</evidence>
<evidence type="ECO:0000305" key="4"/>
<evidence type="ECO:0000312" key="5">
    <source>
        <dbReference type="EMBL" id="AAW57403.1"/>
    </source>
</evidence>
<organism>
    <name type="scientific">Scylla serrata</name>
    <name type="common">Mud crab</name>
    <dbReference type="NCBI Taxonomy" id="6761"/>
    <lineage>
        <taxon>Eukaryota</taxon>
        <taxon>Metazoa</taxon>
        <taxon>Ecdysozoa</taxon>
        <taxon>Arthropoda</taxon>
        <taxon>Crustacea</taxon>
        <taxon>Multicrustacea</taxon>
        <taxon>Malacostraca</taxon>
        <taxon>Eumalacostraca</taxon>
        <taxon>Eucarida</taxon>
        <taxon>Decapoda</taxon>
        <taxon>Pleocyemata</taxon>
        <taxon>Brachyura</taxon>
        <taxon>Eubrachyura</taxon>
        <taxon>Portunoidea</taxon>
        <taxon>Portunidae</taxon>
        <taxon>Portuninae</taxon>
        <taxon>Scylla</taxon>
    </lineage>
</organism>